<name>AROQ_ALIFM</name>
<comment type="function">
    <text evidence="1">Catalyzes a trans-dehydration via an enolate intermediate.</text>
</comment>
<comment type="catalytic activity">
    <reaction evidence="1">
        <text>3-dehydroquinate = 3-dehydroshikimate + H2O</text>
        <dbReference type="Rhea" id="RHEA:21096"/>
        <dbReference type="ChEBI" id="CHEBI:15377"/>
        <dbReference type="ChEBI" id="CHEBI:16630"/>
        <dbReference type="ChEBI" id="CHEBI:32364"/>
        <dbReference type="EC" id="4.2.1.10"/>
    </reaction>
</comment>
<comment type="pathway">
    <text evidence="1">Metabolic intermediate biosynthesis; chorismate biosynthesis; chorismate from D-erythrose 4-phosphate and phosphoenolpyruvate: step 3/7.</text>
</comment>
<comment type="subunit">
    <text evidence="1">Homododecamer.</text>
</comment>
<comment type="similarity">
    <text evidence="1">Belongs to the type-II 3-dehydroquinase family.</text>
</comment>
<gene>
    <name evidence="1" type="primary">aroQ</name>
    <name type="ordered locus">VFMJ11_2504</name>
</gene>
<accession>B5FC62</accession>
<sequence length="149" mass="16494">MSTQSRILVLNGPNLNLLGLREPAHYGSQNLEQIVNALTTQADALGVEIEHLQSNREYELIEAIHNAYQRIDFIIINPAAFTHTSVALRDALLGVDIPFIEVHLSNVHAREPFRHHSYLSDKAVGVICGLGADGYEFALNAAVKRLRSN</sequence>
<protein>
    <recommendedName>
        <fullName evidence="1">3-dehydroquinate dehydratase</fullName>
        <shortName evidence="1">3-dehydroquinase</shortName>
        <ecNumber evidence="1">4.2.1.10</ecNumber>
    </recommendedName>
    <alternativeName>
        <fullName evidence="1">Type II DHQase</fullName>
    </alternativeName>
</protein>
<reference key="1">
    <citation type="submission" date="2008-08" db="EMBL/GenBank/DDBJ databases">
        <title>Complete sequence of Vibrio fischeri strain MJ11.</title>
        <authorList>
            <person name="Mandel M.J."/>
            <person name="Stabb E.V."/>
            <person name="Ruby E.G."/>
            <person name="Ferriera S."/>
            <person name="Johnson J."/>
            <person name="Kravitz S."/>
            <person name="Beeson K."/>
            <person name="Sutton G."/>
            <person name="Rogers Y.-H."/>
            <person name="Friedman R."/>
            <person name="Frazier M."/>
            <person name="Venter J.C."/>
        </authorList>
    </citation>
    <scope>NUCLEOTIDE SEQUENCE [LARGE SCALE GENOMIC DNA]</scope>
    <source>
        <strain>MJ11</strain>
    </source>
</reference>
<evidence type="ECO:0000255" key="1">
    <source>
        <dbReference type="HAMAP-Rule" id="MF_00169"/>
    </source>
</evidence>
<dbReference type="EC" id="4.2.1.10" evidence="1"/>
<dbReference type="EMBL" id="CP001139">
    <property type="protein sequence ID" value="ACH65525.1"/>
    <property type="molecule type" value="Genomic_DNA"/>
</dbReference>
<dbReference type="RefSeq" id="WP_012533115.1">
    <property type="nucleotide sequence ID" value="NC_011184.1"/>
</dbReference>
<dbReference type="SMR" id="B5FC62"/>
<dbReference type="KEGG" id="vfm:VFMJ11_2504"/>
<dbReference type="HOGENOM" id="CLU_090968_1_0_6"/>
<dbReference type="UniPathway" id="UPA00053">
    <property type="reaction ID" value="UER00086"/>
</dbReference>
<dbReference type="Proteomes" id="UP000001857">
    <property type="component" value="Chromosome I"/>
</dbReference>
<dbReference type="GO" id="GO:0003855">
    <property type="term" value="F:3-dehydroquinate dehydratase activity"/>
    <property type="evidence" value="ECO:0007669"/>
    <property type="project" value="UniProtKB-UniRule"/>
</dbReference>
<dbReference type="GO" id="GO:0008652">
    <property type="term" value="P:amino acid biosynthetic process"/>
    <property type="evidence" value="ECO:0007669"/>
    <property type="project" value="UniProtKB-KW"/>
</dbReference>
<dbReference type="GO" id="GO:0009073">
    <property type="term" value="P:aromatic amino acid family biosynthetic process"/>
    <property type="evidence" value="ECO:0007669"/>
    <property type="project" value="UniProtKB-KW"/>
</dbReference>
<dbReference type="GO" id="GO:0009423">
    <property type="term" value="P:chorismate biosynthetic process"/>
    <property type="evidence" value="ECO:0007669"/>
    <property type="project" value="UniProtKB-UniRule"/>
</dbReference>
<dbReference type="GO" id="GO:0019631">
    <property type="term" value="P:quinate catabolic process"/>
    <property type="evidence" value="ECO:0007669"/>
    <property type="project" value="TreeGrafter"/>
</dbReference>
<dbReference type="CDD" id="cd00466">
    <property type="entry name" value="DHQase_II"/>
    <property type="match status" value="1"/>
</dbReference>
<dbReference type="Gene3D" id="3.40.50.9100">
    <property type="entry name" value="Dehydroquinase, class II"/>
    <property type="match status" value="1"/>
</dbReference>
<dbReference type="HAMAP" id="MF_00169">
    <property type="entry name" value="AroQ"/>
    <property type="match status" value="1"/>
</dbReference>
<dbReference type="InterPro" id="IPR001874">
    <property type="entry name" value="DHquinase_II"/>
</dbReference>
<dbReference type="InterPro" id="IPR018509">
    <property type="entry name" value="DHquinase_II_CS"/>
</dbReference>
<dbReference type="InterPro" id="IPR036441">
    <property type="entry name" value="DHquinase_II_sf"/>
</dbReference>
<dbReference type="NCBIfam" id="TIGR01088">
    <property type="entry name" value="aroQ"/>
    <property type="match status" value="1"/>
</dbReference>
<dbReference type="NCBIfam" id="NF003804">
    <property type="entry name" value="PRK05395.1-1"/>
    <property type="match status" value="1"/>
</dbReference>
<dbReference type="NCBIfam" id="NF003805">
    <property type="entry name" value="PRK05395.1-2"/>
    <property type="match status" value="1"/>
</dbReference>
<dbReference type="NCBIfam" id="NF003806">
    <property type="entry name" value="PRK05395.1-3"/>
    <property type="match status" value="1"/>
</dbReference>
<dbReference type="NCBIfam" id="NF003807">
    <property type="entry name" value="PRK05395.1-4"/>
    <property type="match status" value="1"/>
</dbReference>
<dbReference type="PANTHER" id="PTHR21272">
    <property type="entry name" value="CATABOLIC 3-DEHYDROQUINASE"/>
    <property type="match status" value="1"/>
</dbReference>
<dbReference type="PANTHER" id="PTHR21272:SF3">
    <property type="entry name" value="CATABOLIC 3-DEHYDROQUINASE"/>
    <property type="match status" value="1"/>
</dbReference>
<dbReference type="Pfam" id="PF01220">
    <property type="entry name" value="DHquinase_II"/>
    <property type="match status" value="1"/>
</dbReference>
<dbReference type="PIRSF" id="PIRSF001399">
    <property type="entry name" value="DHquinase_II"/>
    <property type="match status" value="1"/>
</dbReference>
<dbReference type="SUPFAM" id="SSF52304">
    <property type="entry name" value="Type II 3-dehydroquinate dehydratase"/>
    <property type="match status" value="1"/>
</dbReference>
<dbReference type="PROSITE" id="PS01029">
    <property type="entry name" value="DEHYDROQUINASE_II"/>
    <property type="match status" value="1"/>
</dbReference>
<feature type="chain" id="PRO_1000097632" description="3-dehydroquinate dehydratase">
    <location>
        <begin position="1"/>
        <end position="149"/>
    </location>
</feature>
<feature type="active site" description="Proton acceptor" evidence="1">
    <location>
        <position position="26"/>
    </location>
</feature>
<feature type="active site" description="Proton donor" evidence="1">
    <location>
        <position position="103"/>
    </location>
</feature>
<feature type="binding site" evidence="1">
    <location>
        <position position="77"/>
    </location>
    <ligand>
        <name>substrate</name>
    </ligand>
</feature>
<feature type="binding site" evidence="1">
    <location>
        <position position="83"/>
    </location>
    <ligand>
        <name>substrate</name>
    </ligand>
</feature>
<feature type="binding site" evidence="1">
    <location>
        <position position="90"/>
    </location>
    <ligand>
        <name>substrate</name>
    </ligand>
</feature>
<feature type="binding site" evidence="1">
    <location>
        <begin position="104"/>
        <end position="105"/>
    </location>
    <ligand>
        <name>substrate</name>
    </ligand>
</feature>
<feature type="binding site" evidence="1">
    <location>
        <position position="114"/>
    </location>
    <ligand>
        <name>substrate</name>
    </ligand>
</feature>
<feature type="site" description="Transition state stabilizer" evidence="1">
    <location>
        <position position="21"/>
    </location>
</feature>
<keyword id="KW-0028">Amino-acid biosynthesis</keyword>
<keyword id="KW-0057">Aromatic amino acid biosynthesis</keyword>
<keyword id="KW-0456">Lyase</keyword>
<proteinExistence type="inferred from homology"/>
<organism>
    <name type="scientific">Aliivibrio fischeri (strain MJ11)</name>
    <name type="common">Vibrio fischeri</name>
    <dbReference type="NCBI Taxonomy" id="388396"/>
    <lineage>
        <taxon>Bacteria</taxon>
        <taxon>Pseudomonadati</taxon>
        <taxon>Pseudomonadota</taxon>
        <taxon>Gammaproteobacteria</taxon>
        <taxon>Vibrionales</taxon>
        <taxon>Vibrionaceae</taxon>
        <taxon>Aliivibrio</taxon>
    </lineage>
</organism>